<gene>
    <name type="primary">NASP</name>
</gene>
<protein>
    <recommendedName>
        <fullName>Nuclear autoantigenic sperm protein</fullName>
        <shortName>NASP</shortName>
    </recommendedName>
</protein>
<dbReference type="EMBL" id="M37893">
    <property type="protein sequence ID" value="AAA31423.1"/>
    <property type="status" value="ALT_INIT"/>
    <property type="molecule type" value="mRNA"/>
</dbReference>
<dbReference type="PIR" id="A43800">
    <property type="entry name" value="A43800"/>
</dbReference>
<dbReference type="RefSeq" id="NP_001076258.1">
    <property type="nucleotide sequence ID" value="NM_001082789.1"/>
</dbReference>
<dbReference type="SMR" id="P27123"/>
<dbReference type="FunCoup" id="P27123">
    <property type="interactions" value="2592"/>
</dbReference>
<dbReference type="STRING" id="9986.ENSOCUP00000025752"/>
<dbReference type="PaxDb" id="9986-ENSOCUP00000025752"/>
<dbReference type="GeneID" id="100009592"/>
<dbReference type="KEGG" id="ocu:100009592"/>
<dbReference type="CTD" id="4678"/>
<dbReference type="eggNOG" id="KOG4563">
    <property type="taxonomic scope" value="Eukaryota"/>
</dbReference>
<dbReference type="InParanoid" id="P27123"/>
<dbReference type="OrthoDB" id="5587616at2759"/>
<dbReference type="Proteomes" id="UP000001811">
    <property type="component" value="Unplaced"/>
</dbReference>
<dbReference type="GO" id="GO:0005737">
    <property type="term" value="C:cytoplasm"/>
    <property type="evidence" value="ECO:0007669"/>
    <property type="project" value="UniProtKB-SubCell"/>
</dbReference>
<dbReference type="GO" id="GO:0005654">
    <property type="term" value="C:nucleoplasm"/>
    <property type="evidence" value="ECO:0007669"/>
    <property type="project" value="TreeGrafter"/>
</dbReference>
<dbReference type="GO" id="GO:0005634">
    <property type="term" value="C:nucleus"/>
    <property type="evidence" value="ECO:0000250"/>
    <property type="project" value="UniProtKB"/>
</dbReference>
<dbReference type="GO" id="GO:0042393">
    <property type="term" value="F:histone binding"/>
    <property type="evidence" value="ECO:0000250"/>
    <property type="project" value="UniProtKB"/>
</dbReference>
<dbReference type="GO" id="GO:0140713">
    <property type="term" value="F:histone chaperone activity"/>
    <property type="evidence" value="ECO:0000250"/>
    <property type="project" value="UniProtKB"/>
</dbReference>
<dbReference type="GO" id="GO:0001824">
    <property type="term" value="P:blastocyst development"/>
    <property type="evidence" value="ECO:0000250"/>
    <property type="project" value="UniProtKB"/>
</dbReference>
<dbReference type="GO" id="GO:0034080">
    <property type="term" value="P:CENP-A containing chromatin assembly"/>
    <property type="evidence" value="ECO:0007669"/>
    <property type="project" value="TreeGrafter"/>
</dbReference>
<dbReference type="GO" id="GO:0006335">
    <property type="term" value="P:DNA replication-dependent chromatin assembly"/>
    <property type="evidence" value="ECO:0000250"/>
    <property type="project" value="UniProtKB"/>
</dbReference>
<dbReference type="FunFam" id="1.25.40.10:FF:000087">
    <property type="entry name" value="Nuclear autoantigenic sperm protein (Histone-binding)"/>
    <property type="match status" value="1"/>
</dbReference>
<dbReference type="Gene3D" id="1.25.40.10">
    <property type="entry name" value="Tetratricopeptide repeat domain"/>
    <property type="match status" value="1"/>
</dbReference>
<dbReference type="InterPro" id="IPR051730">
    <property type="entry name" value="NASP-like"/>
</dbReference>
<dbReference type="InterPro" id="IPR011990">
    <property type="entry name" value="TPR-like_helical_dom_sf"/>
</dbReference>
<dbReference type="InterPro" id="IPR019734">
    <property type="entry name" value="TPR_rpt"/>
</dbReference>
<dbReference type="PANTHER" id="PTHR15081:SF1">
    <property type="entry name" value="NUCLEAR AUTOANTIGENIC SPERM PROTEIN"/>
    <property type="match status" value="1"/>
</dbReference>
<dbReference type="PANTHER" id="PTHR15081">
    <property type="entry name" value="NUCLEAR AUTOANTIGENIC SPERM PROTEIN NASP -RELATED"/>
    <property type="match status" value="1"/>
</dbReference>
<dbReference type="Pfam" id="PF13424">
    <property type="entry name" value="TPR_12"/>
    <property type="match status" value="1"/>
</dbReference>
<dbReference type="SMART" id="SM00028">
    <property type="entry name" value="TPR"/>
    <property type="match status" value="2"/>
</dbReference>
<dbReference type="SUPFAM" id="SSF48452">
    <property type="entry name" value="TPR-like"/>
    <property type="match status" value="1"/>
</dbReference>
<dbReference type="PROSITE" id="PS50005">
    <property type="entry name" value="TPR"/>
    <property type="match status" value="2"/>
</dbReference>
<dbReference type="PROSITE" id="PS50293">
    <property type="entry name" value="TPR_REGION"/>
    <property type="match status" value="1"/>
</dbReference>
<feature type="chain" id="PRO_0000106300" description="Nuclear autoantigenic sperm protein">
    <location>
        <begin position="1" status="less than"/>
        <end position="693"/>
    </location>
</feature>
<feature type="repeat" description="TPR 1" evidence="5">
    <location>
        <begin position="448"/>
        <end position="481"/>
    </location>
</feature>
<feature type="repeat" description="TPR 2" evidence="5">
    <location>
        <begin position="490"/>
        <end position="523"/>
    </location>
</feature>
<feature type="region of interest" description="Disordered" evidence="6">
    <location>
        <begin position="25"/>
        <end position="415"/>
    </location>
</feature>
<feature type="region of interest" description="Histone-binding" evidence="1">
    <location>
        <begin position="29"/>
        <end position="40"/>
    </location>
</feature>
<feature type="region of interest" description="Histone-binding" evidence="1">
    <location>
        <begin position="124"/>
        <end position="157"/>
    </location>
</feature>
<feature type="region of interest" description="Histone-binding" evidence="1">
    <location>
        <begin position="374"/>
        <end position="418"/>
    </location>
</feature>
<feature type="region of interest" description="Disordered" evidence="6">
    <location>
        <begin position="583"/>
        <end position="693"/>
    </location>
</feature>
<feature type="coiled-coil region" evidence="4">
    <location>
        <begin position="510"/>
        <end position="565"/>
    </location>
</feature>
<feature type="short sequence motif" description="Nuclear localization signal" evidence="4">
    <location>
        <begin position="622"/>
        <end position="628"/>
    </location>
</feature>
<feature type="compositionally biased region" description="Acidic residues" evidence="6">
    <location>
        <begin position="29"/>
        <end position="53"/>
    </location>
</feature>
<feature type="compositionally biased region" description="Basic and acidic residues" evidence="6">
    <location>
        <begin position="54"/>
        <end position="74"/>
    </location>
</feature>
<feature type="compositionally biased region" description="Basic and acidic residues" evidence="6">
    <location>
        <begin position="82"/>
        <end position="99"/>
    </location>
</feature>
<feature type="compositionally biased region" description="Low complexity" evidence="6">
    <location>
        <begin position="128"/>
        <end position="139"/>
    </location>
</feature>
<feature type="compositionally biased region" description="Basic and acidic residues" evidence="6">
    <location>
        <begin position="145"/>
        <end position="156"/>
    </location>
</feature>
<feature type="compositionally biased region" description="Basic and acidic residues" evidence="6">
    <location>
        <begin position="164"/>
        <end position="187"/>
    </location>
</feature>
<feature type="compositionally biased region" description="Basic and acidic residues" evidence="6">
    <location>
        <begin position="307"/>
        <end position="322"/>
    </location>
</feature>
<feature type="compositionally biased region" description="Acidic residues" evidence="6">
    <location>
        <begin position="380"/>
        <end position="400"/>
    </location>
</feature>
<feature type="compositionally biased region" description="Basic and acidic residues" evidence="6">
    <location>
        <begin position="627"/>
        <end position="645"/>
    </location>
</feature>
<feature type="modified residue" description="Phosphothreonine" evidence="2">
    <location>
        <position position="36"/>
    </location>
</feature>
<feature type="modified residue" description="Phosphoserine" evidence="2">
    <location>
        <position position="40"/>
    </location>
</feature>
<feature type="modified residue" description="Phosphothreonine" evidence="2">
    <location>
        <position position="83"/>
    </location>
</feature>
<feature type="modified residue" description="Phosphoserine" evidence="2">
    <location>
        <position position="89"/>
    </location>
</feature>
<feature type="modified residue" description="Phosphoserine" evidence="2">
    <location>
        <position position="102"/>
    </location>
</feature>
<feature type="modified residue" description="N6-acetyllysine" evidence="3">
    <location>
        <position position="156"/>
    </location>
</feature>
<feature type="modified residue" description="Phosphoserine" evidence="2">
    <location>
        <position position="157"/>
    </location>
</feature>
<feature type="modified residue" description="N6-acetyllysine" evidence="3">
    <location>
        <position position="199"/>
    </location>
</feature>
<feature type="modified residue" description="Phosphoserine" evidence="2">
    <location>
        <position position="232"/>
    </location>
</feature>
<feature type="modified residue" description="Phosphoserine" evidence="2">
    <location>
        <position position="304"/>
    </location>
</feature>
<feature type="modified residue" description="Phosphoserine" evidence="2">
    <location>
        <position position="315"/>
    </location>
</feature>
<feature type="modified residue" description="Phosphoserine" evidence="2">
    <location>
        <position position="327"/>
    </location>
</feature>
<feature type="modified residue" description="Phosphoserine" evidence="2">
    <location>
        <position position="356"/>
    </location>
</feature>
<feature type="modified residue" description="Phosphothreonine" evidence="2">
    <location>
        <position position="369"/>
    </location>
</feature>
<feature type="modified residue" description="Phosphothreonine" evidence="2">
    <location>
        <position position="382"/>
    </location>
</feature>
<feature type="modified residue" description="Phosphoserine" evidence="2">
    <location>
        <position position="385"/>
    </location>
</feature>
<feature type="modified residue" description="Phosphoserine" evidence="2">
    <location>
        <position position="403"/>
    </location>
</feature>
<feature type="modified residue" description="Phosphoserine" evidence="2">
    <location>
        <position position="409"/>
    </location>
</feature>
<feature type="modified residue" description="Phosphoserine" evidence="2">
    <location>
        <position position="568"/>
    </location>
</feature>
<feature type="modified residue" description="Phosphothreonine" evidence="2">
    <location>
        <position position="589"/>
    </location>
</feature>
<feature type="modified residue" description="Phosphoserine" evidence="2">
    <location>
        <position position="611"/>
    </location>
</feature>
<feature type="modified residue" description="Phosphoserine" evidence="2">
    <location>
        <position position="612"/>
    </location>
</feature>
<feature type="modified residue" description="Phosphoserine" evidence="2">
    <location>
        <position position="632"/>
    </location>
</feature>
<feature type="modified residue" description="Phosphoserine" evidence="2">
    <location>
        <position position="651"/>
    </location>
</feature>
<feature type="modified residue" description="Phosphoserine" evidence="2">
    <location>
        <position position="657"/>
    </location>
</feature>
<feature type="modified residue" description="Phosphoserine" evidence="2">
    <location>
        <position position="662"/>
    </location>
</feature>
<feature type="cross-link" description="Glycyl lysine isopeptide (Lys-Gly) (interchain with G-Cter in SUMO1)" evidence="2">
    <location>
        <position position="642"/>
    </location>
</feature>
<feature type="non-terminal residue">
    <location>
        <position position="1"/>
    </location>
</feature>
<accession>P27123</accession>
<comment type="function">
    <text evidence="2 3">Component of the histone chaperone network (By similarity). Binds and stabilizes histone H3-H4 not bound to chromatin to maintain a soluble reservoir and modulate degradation by chaperone-mediated autophagy (By similarity). Required for DNA replication, normal cell cycle progression and cell proliferation. Forms a cytoplasmic complex with HSP90 and H1 linker histones and stimulates HSP90 ATPase activity. NASP and H1 histone are subsequently released from the complex and translocate to the nucleus where the histone is released for binding to DNA.</text>
</comment>
<comment type="subunit">
    <text evidence="2 3">Binds to linker H1 histones (By similarity). Interacts with histones H2A, H2B, H3 and H4 (By similarity). Interacts with histone H3.3 (By similarity). Interacts with histones H3 and H4; NASP is a histone chaperone that stabilizes and maintains a soluble pool of histone H3-H4 dimers (By similarity). Interacts with ASF1A and ASF1B; the interaction is probably indirect and mediated by H3-H4 (By similarity). Also binds to HSP90 in the cytoplasm. This interaction stimulates binding of NASP to H1-6/H1T (By similarity).</text>
</comment>
<comment type="subcellular location">
    <subcellularLocation>
        <location evidence="3">Cytoplasm</location>
    </subcellularLocation>
    <subcellularLocation>
        <location evidence="3">Nucleus</location>
    </subcellularLocation>
</comment>
<comment type="tissue specificity">
    <text>Testis- and sperm-specific.</text>
</comment>
<comment type="similarity">
    <text evidence="7">Belongs to the NASP family.</text>
</comment>
<comment type="sequence caution" evidence="7">
    <conflict type="erroneous initiation">
        <sequence resource="EMBL-CDS" id="AAA31423"/>
    </conflict>
</comment>
<reference key="1">
    <citation type="journal article" date="1990" name="Biol. Reprod.">
        <title>Characterization of a sperm-specific nuclear autoantigenic protein. I. Complete sequence and homology with the Xenopus protein, N1/N2.</title>
        <authorList>
            <person name="Welch J.E."/>
            <person name="Zimmerman L.J."/>
            <person name="Joseph D.R."/>
            <person name="O'Rand M.G."/>
        </authorList>
    </citation>
    <scope>NUCLEOTIDE SEQUENCE [MRNA]</scope>
    <source>
        <strain>New Zealand white</strain>
        <tissue>Testis</tissue>
    </source>
</reference>
<evidence type="ECO:0000250" key="1"/>
<evidence type="ECO:0000250" key="2">
    <source>
        <dbReference type="UniProtKB" id="P49321"/>
    </source>
</evidence>
<evidence type="ECO:0000250" key="3">
    <source>
        <dbReference type="UniProtKB" id="Q99MD9"/>
    </source>
</evidence>
<evidence type="ECO:0000255" key="4"/>
<evidence type="ECO:0000255" key="5">
    <source>
        <dbReference type="PROSITE-ProRule" id="PRU00339"/>
    </source>
</evidence>
<evidence type="ECO:0000256" key="6">
    <source>
        <dbReference type="SAM" id="MobiDB-lite"/>
    </source>
</evidence>
<evidence type="ECO:0000305" key="7"/>
<keyword id="KW-0007">Acetylation</keyword>
<keyword id="KW-0175">Coiled coil</keyword>
<keyword id="KW-0963">Cytoplasm</keyword>
<keyword id="KW-1017">Isopeptide bond</keyword>
<keyword id="KW-0539">Nucleus</keyword>
<keyword id="KW-0597">Phosphoprotein</keyword>
<keyword id="KW-1185">Reference proteome</keyword>
<keyword id="KW-0677">Repeat</keyword>
<keyword id="KW-0802">TPR repeat</keyword>
<keyword id="KW-0832">Ubl conjugation</keyword>
<organism>
    <name type="scientific">Oryctolagus cuniculus</name>
    <name type="common">Rabbit</name>
    <dbReference type="NCBI Taxonomy" id="9986"/>
    <lineage>
        <taxon>Eukaryota</taxon>
        <taxon>Metazoa</taxon>
        <taxon>Chordata</taxon>
        <taxon>Craniata</taxon>
        <taxon>Vertebrata</taxon>
        <taxon>Euteleostomi</taxon>
        <taxon>Mammalia</taxon>
        <taxon>Eutheria</taxon>
        <taxon>Euarchontoglires</taxon>
        <taxon>Glires</taxon>
        <taxon>Lagomorpha</taxon>
        <taxon>Leporidae</taxon>
        <taxon>Oryctolagus</taxon>
    </lineage>
</organism>
<proteinExistence type="evidence at transcript level"/>
<name>NASP_RABIT</name>
<sequence>IYYTFDSFFCSPRMENGVLGNALEGVHVEEEEGEKTEEESLVENNDNVDEEAREELREQVYDAMGEKEESKKTEGMSLSKPETAKEQESEMEKGGREDMDISEPTEELPEKVALTPDQLTETSEEAEGAAAPEGLNEAEVTSGKSEQEAADAEKGKSVSGTDVQEEHKEQVEEKQGEVIVRIEKPTEASEEQPGTTLGKDNTAVEVEAEPVDATAKPVDVGGHEPKEQMATSGNEPGKAVLNQQLVGQDVPPVEESPMVTTEAAEVGSEVSEKSEQEATVVSNDGAVNGLSAAGDQASVDPQPSAERVTETKGGSELEEVRAELAPSQEAKLPIEESEGAGDGVETKVAQGVTEKSPEDKVKIAANEETQEREEQMKEGEETEGSEEEDKENDKAEEETPNDSVLENKSLPENEEEEIGNLELAWDMLDLAKIIFKRQETKEAQLYAAQAHLKLGEVSVESQNYIQAVEEFQACLSLQEQYLEAHDRLLAETHYQLGLAYGYNSQYDEAVAQFSKSIEVIEKRMAVLNEQMKEAEGSSTEYEKEIEELKELLPEIREKIEDAKESQRSGNVAELALKATLVGSSTSGFTPSGGGSSVSTIASRKPADGASSSNCVTDISHLVRKKRKPEEESPRKDDAKKAKQEPEVNGGSGDAVPSGNEVSENMEEAENQTESRAAMEGTVEAGATVESTAC</sequence>